<keyword id="KW-0235">DNA replication</keyword>
<keyword id="KW-0240">DNA-directed RNA polymerase</keyword>
<keyword id="KW-0460">Magnesium</keyword>
<keyword id="KW-0464">Manganese</keyword>
<keyword id="KW-0479">Metal-binding</keyword>
<keyword id="KW-0548">Nucleotidyltransferase</keyword>
<keyword id="KW-0639">Primosome</keyword>
<keyword id="KW-1185">Reference proteome</keyword>
<keyword id="KW-0804">Transcription</keyword>
<keyword id="KW-0808">Transferase</keyword>
<reference key="1">
    <citation type="submission" date="2006-10" db="EMBL/GenBank/DDBJ databases">
        <title>Complete sequence of Methanosaeta thermophila PT.</title>
        <authorList>
            <consortium name="US DOE Joint Genome Institute"/>
            <person name="Copeland A."/>
            <person name="Lucas S."/>
            <person name="Lapidus A."/>
            <person name="Barry K."/>
            <person name="Detter J.C."/>
            <person name="Glavina del Rio T."/>
            <person name="Hammon N."/>
            <person name="Israni S."/>
            <person name="Pitluck S."/>
            <person name="Chain P."/>
            <person name="Malfatti S."/>
            <person name="Shin M."/>
            <person name="Vergez L."/>
            <person name="Schmutz J."/>
            <person name="Larimer F."/>
            <person name="Land M."/>
            <person name="Hauser L."/>
            <person name="Kyrpides N."/>
            <person name="Kim E."/>
            <person name="Smith K.S."/>
            <person name="Ingram-Smith C."/>
            <person name="Richardson P."/>
        </authorList>
    </citation>
    <scope>NUCLEOTIDE SEQUENCE [LARGE SCALE GENOMIC DNA]</scope>
    <source>
        <strain>DSM 6194 / JCM 14653 / NBRC 101360 / PT</strain>
    </source>
</reference>
<proteinExistence type="inferred from homology"/>
<evidence type="ECO:0000255" key="1">
    <source>
        <dbReference type="HAMAP-Rule" id="MF_00700"/>
    </source>
</evidence>
<accession>A0B688</accession>
<protein>
    <recommendedName>
        <fullName evidence="1">DNA primase small subunit PriS</fullName>
        <ecNumber evidence="1">2.7.7.-</ecNumber>
    </recommendedName>
</protein>
<feature type="chain" id="PRO_1000045508" description="DNA primase small subunit PriS">
    <location>
        <begin position="1"/>
        <end position="395"/>
    </location>
</feature>
<feature type="active site" evidence="1">
    <location>
        <position position="95"/>
    </location>
</feature>
<feature type="active site" evidence="1">
    <location>
        <position position="97"/>
    </location>
</feature>
<feature type="active site" evidence="1">
    <location>
        <position position="302"/>
    </location>
</feature>
<sequence>MESKTSTYLRARFREYYLTASMDAPPGMEAREWGFIFYDTPGMRRHRSFRSRKELVDYIRSTVPAHVYHSAAYYLKPDAPTMKEKIWKGADLIFDLDADHLAEYRGSGIRDFREMLERVKGETMKLLEFLLSDFGFDERMISVAFSGGRGYHIHVRDKSVLKLRSDARREIVDYLTGRGLDPERFIHKIGVDGDAGVERARSLRGPASDAPGWGGRINKAIESMVMHLRELDDEEALRLLKNVKGIGKQKARLFLSQIREENAIKSIRAGNLDFFKHASGIWNLIIPYIMEETVRALGGETDEPVTADVHRLIRFPESLHGGTGLRVTSLSINSLHAFDPLKDAVVFGDDPVHVEIIRPTTLELMGERFDLLEGKTELPEYAAVFLLARGFAEVG</sequence>
<name>PRIS_METTP</name>
<gene>
    <name evidence="1" type="primary">priS</name>
    <name type="synonym">priA</name>
    <name type="ordered locus">Mthe_0420</name>
</gene>
<comment type="function">
    <text evidence="1">Catalytic subunit of DNA primase, an RNA polymerase that catalyzes the synthesis of short RNA molecules used as primers for DNA polymerase during DNA replication. The small subunit contains the primase catalytic core and has DNA synthesis activity on its own. Binding to the large subunit stabilizes and modulates the activity, increasing the rate of DNA synthesis while decreasing the length of the DNA fragments, and conferring RNA synthesis capability. The DNA polymerase activity may enable DNA primase to also catalyze primer extension after primer synthesis. May also play a role in DNA repair.</text>
</comment>
<comment type="cofactor">
    <cofactor evidence="1">
        <name>Mg(2+)</name>
        <dbReference type="ChEBI" id="CHEBI:18420"/>
    </cofactor>
    <cofactor evidence="1">
        <name>Mn(2+)</name>
        <dbReference type="ChEBI" id="CHEBI:29035"/>
    </cofactor>
</comment>
<comment type="subunit">
    <text evidence="1">Heterodimer of a small subunit (PriS) and a large subunit (PriL).</text>
</comment>
<comment type="similarity">
    <text evidence="1">Belongs to the eukaryotic-type primase small subunit family.</text>
</comment>
<dbReference type="EC" id="2.7.7.-" evidence="1"/>
<dbReference type="EMBL" id="CP000477">
    <property type="protein sequence ID" value="ABK14212.1"/>
    <property type="molecule type" value="Genomic_DNA"/>
</dbReference>
<dbReference type="RefSeq" id="WP_011695610.1">
    <property type="nucleotide sequence ID" value="NC_008553.1"/>
</dbReference>
<dbReference type="SMR" id="A0B688"/>
<dbReference type="STRING" id="349307.Mthe_0420"/>
<dbReference type="GeneID" id="4462013"/>
<dbReference type="KEGG" id="mtp:Mthe_0420"/>
<dbReference type="HOGENOM" id="CLU_056123_1_0_2"/>
<dbReference type="OrthoDB" id="31125at2157"/>
<dbReference type="Proteomes" id="UP000000674">
    <property type="component" value="Chromosome"/>
</dbReference>
<dbReference type="GO" id="GO:0000428">
    <property type="term" value="C:DNA-directed RNA polymerase complex"/>
    <property type="evidence" value="ECO:0007669"/>
    <property type="project" value="UniProtKB-KW"/>
</dbReference>
<dbReference type="GO" id="GO:1990077">
    <property type="term" value="C:primosome complex"/>
    <property type="evidence" value="ECO:0007669"/>
    <property type="project" value="UniProtKB-KW"/>
</dbReference>
<dbReference type="GO" id="GO:0003899">
    <property type="term" value="F:DNA-directed RNA polymerase activity"/>
    <property type="evidence" value="ECO:0007669"/>
    <property type="project" value="InterPro"/>
</dbReference>
<dbReference type="GO" id="GO:0046872">
    <property type="term" value="F:metal ion binding"/>
    <property type="evidence" value="ECO:0007669"/>
    <property type="project" value="UniProtKB-KW"/>
</dbReference>
<dbReference type="GO" id="GO:0006269">
    <property type="term" value="P:DNA replication, synthesis of primer"/>
    <property type="evidence" value="ECO:0007669"/>
    <property type="project" value="UniProtKB-UniRule"/>
</dbReference>
<dbReference type="CDD" id="cd04860">
    <property type="entry name" value="AE_Prim_S"/>
    <property type="match status" value="1"/>
</dbReference>
<dbReference type="Gene3D" id="3.90.920.10">
    <property type="entry name" value="DNA primase, PRIM domain"/>
    <property type="match status" value="1"/>
</dbReference>
<dbReference type="HAMAP" id="MF_00700">
    <property type="entry name" value="DNA_primase_sml_arc"/>
    <property type="match status" value="1"/>
</dbReference>
<dbReference type="InterPro" id="IPR002755">
    <property type="entry name" value="DNA_primase_S"/>
</dbReference>
<dbReference type="InterPro" id="IPR014052">
    <property type="entry name" value="DNA_primase_ssu_euk/arc"/>
</dbReference>
<dbReference type="InterPro" id="IPR023639">
    <property type="entry name" value="DNA_primase_ssu_PriS"/>
</dbReference>
<dbReference type="NCBIfam" id="TIGR00335">
    <property type="entry name" value="primase_sml"/>
    <property type="match status" value="1"/>
</dbReference>
<dbReference type="PANTHER" id="PTHR10536">
    <property type="entry name" value="DNA PRIMASE SMALL SUBUNIT"/>
    <property type="match status" value="1"/>
</dbReference>
<dbReference type="Pfam" id="PF01896">
    <property type="entry name" value="DNA_primase_S"/>
    <property type="match status" value="1"/>
</dbReference>
<dbReference type="SUPFAM" id="SSF56747">
    <property type="entry name" value="Prim-pol domain"/>
    <property type="match status" value="1"/>
</dbReference>
<organism>
    <name type="scientific">Methanothrix thermoacetophila (strain DSM 6194 / JCM 14653 / NBRC 101360 / PT)</name>
    <name type="common">Methanosaeta thermophila</name>
    <dbReference type="NCBI Taxonomy" id="349307"/>
    <lineage>
        <taxon>Archaea</taxon>
        <taxon>Methanobacteriati</taxon>
        <taxon>Methanobacteriota</taxon>
        <taxon>Stenosarchaea group</taxon>
        <taxon>Methanomicrobia</taxon>
        <taxon>Methanotrichales</taxon>
        <taxon>Methanotrichaceae</taxon>
        <taxon>Methanothrix</taxon>
    </lineage>
</organism>